<feature type="chain" id="PRO_0000459991" description="Polybrominated aromatic compounds synthase">
    <location>
        <begin position="1"/>
        <end position="491"/>
    </location>
</feature>
<feature type="binding site" description="axial binding residue" evidence="2">
    <location>
        <position position="437"/>
    </location>
    <ligand>
        <name>heme</name>
        <dbReference type="ChEBI" id="CHEBI:30413"/>
    </ligand>
    <ligandPart>
        <name>Fe</name>
        <dbReference type="ChEBI" id="CHEBI:18248"/>
    </ligandPart>
</feature>
<organism>
    <name type="scientific">Pseudoalteromonas luteoviolacea (strain 2ta16)</name>
    <dbReference type="NCBI Taxonomy" id="1353533"/>
    <lineage>
        <taxon>Bacteria</taxon>
        <taxon>Pseudomonadati</taxon>
        <taxon>Pseudomonadota</taxon>
        <taxon>Gammaproteobacteria</taxon>
        <taxon>Alteromonadales</taxon>
        <taxon>Pseudoalteromonadaceae</taxon>
        <taxon>Pseudoalteromonas</taxon>
    </lineage>
</organism>
<keyword id="KW-0349">Heme</keyword>
<keyword id="KW-0408">Iron</keyword>
<keyword id="KW-0479">Metal-binding</keyword>
<keyword id="KW-0560">Oxidoreductase</keyword>
<sequence>MKNTDTAEALPQSKLNLDELTPTIPHISFDSEDGQQFFWGEDFHLIIESLSKKYGDIYSVETAKGPIVALNGYQYVREALVAQNDVFNVRADYEILQIAPQKHFLELEAGEQWQVHRKVFANAMREYFSTRWDQIETWMTTEVNDIAAVWKAQGDVSFDPNREVSLKLASFLHKVMFDDRFGEFEVSIFDEKSLSWLPNGFINSTRHELMPTDLQERYYQQYGDAIEKFSSNLNGLDQYVSFNVNRRKEDYVAGEYRDLCDYLFAANDSVDDATKAGLNIGEKEIVVGSLTQVAGAGGGVGAFAMRWALLYLAAFPEYQARVQKELDEVVGDDEVPLNKHKADLPYTQAFIAEVLRHCSITSMPAANYATSKDTLLDGYFIPEGTPLVINNYSITRDETLWENPDEFIPERFLDDNGELSKKQQGKAFPFGLGQRRCLGELFGKYIIHTLFAQLAHKFEFSIPEGKQVNLKAISGVFLVPEEVDIKAKSRL</sequence>
<gene>
    <name evidence="4" type="primary">bmp7</name>
    <name evidence="7" type="ORF">PL2TA16_01241</name>
</gene>
<accession>V4HJ73</accession>
<protein>
    <recommendedName>
        <fullName evidence="5">Polybrominated aromatic compounds synthase</fullName>
        <ecNumber evidence="6">1.14.19.-</ecNumber>
    </recommendedName>
    <alternativeName>
        <fullName evidence="4">CYP450 Bmp7</fullName>
    </alternativeName>
</protein>
<proteinExistence type="inferred from homology"/>
<reference key="1">
    <citation type="journal article" date="2014" name="Nat. Chem. Biol.">
        <title>Biosynthesis of polybrominated aromatic organic compounds by marine bacteria.</title>
        <authorList>
            <person name="Agarwal V."/>
            <person name="El Gamal A.A."/>
            <person name="Yamanaka K."/>
            <person name="Poth D."/>
            <person name="Kersten R.D."/>
            <person name="Schorn M."/>
            <person name="Allen E.E."/>
            <person name="Moore B.S."/>
        </authorList>
    </citation>
    <scope>NUCLEOTIDE SEQUENCE [LARGE SCALE GENOMIC DNA]</scope>
    <scope>FUNCTION</scope>
    <scope>DISRUPTION PHENOTYPE</scope>
    <source>
        <strain>2ta16</strain>
    </source>
</reference>
<name>BMP7_PSEL2</name>
<evidence type="ECO:0000250" key="1">
    <source>
        <dbReference type="UniProtKB" id="F2K081"/>
    </source>
</evidence>
<evidence type="ECO:0000250" key="2">
    <source>
        <dbReference type="UniProtKB" id="Q9K498"/>
    </source>
</evidence>
<evidence type="ECO:0000269" key="3">
    <source>
    </source>
</evidence>
<evidence type="ECO:0000303" key="4">
    <source>
    </source>
</evidence>
<evidence type="ECO:0000305" key="5"/>
<evidence type="ECO:0000305" key="6">
    <source>
    </source>
</evidence>
<evidence type="ECO:0000312" key="7">
    <source>
        <dbReference type="EMBL" id="ESP90850.1"/>
    </source>
</evidence>
<dbReference type="EC" id="1.14.19.-" evidence="6"/>
<dbReference type="EMBL" id="AUSV01000133">
    <property type="protein sequence ID" value="ESP90850.1"/>
    <property type="molecule type" value="Genomic_DNA"/>
</dbReference>
<dbReference type="RefSeq" id="WP_023401496.1">
    <property type="nucleotide sequence ID" value="NZ_AUSV01000133.1"/>
</dbReference>
<dbReference type="SMR" id="V4HJ73"/>
<dbReference type="PATRIC" id="fig|1353533.3.peg.4660"/>
<dbReference type="BioCyc" id="MetaCyc:MONOMER-20312"/>
<dbReference type="Proteomes" id="UP000017820">
    <property type="component" value="Unassembled WGS sequence"/>
</dbReference>
<dbReference type="GO" id="GO:0020037">
    <property type="term" value="F:heme binding"/>
    <property type="evidence" value="ECO:0007669"/>
    <property type="project" value="InterPro"/>
</dbReference>
<dbReference type="GO" id="GO:0005506">
    <property type="term" value="F:iron ion binding"/>
    <property type="evidence" value="ECO:0007669"/>
    <property type="project" value="InterPro"/>
</dbReference>
<dbReference type="GO" id="GO:0004508">
    <property type="term" value="F:steroid 17-alpha-monooxygenase activity"/>
    <property type="evidence" value="ECO:0007669"/>
    <property type="project" value="TreeGrafter"/>
</dbReference>
<dbReference type="GO" id="GO:0042446">
    <property type="term" value="P:hormone biosynthetic process"/>
    <property type="evidence" value="ECO:0007669"/>
    <property type="project" value="TreeGrafter"/>
</dbReference>
<dbReference type="GO" id="GO:0042448">
    <property type="term" value="P:progesterone metabolic process"/>
    <property type="evidence" value="ECO:0007669"/>
    <property type="project" value="TreeGrafter"/>
</dbReference>
<dbReference type="Gene3D" id="1.10.630.10">
    <property type="entry name" value="Cytochrome P450"/>
    <property type="match status" value="1"/>
</dbReference>
<dbReference type="InterPro" id="IPR001128">
    <property type="entry name" value="Cyt_P450"/>
</dbReference>
<dbReference type="InterPro" id="IPR017972">
    <property type="entry name" value="Cyt_P450_CS"/>
</dbReference>
<dbReference type="InterPro" id="IPR002401">
    <property type="entry name" value="Cyt_P450_E_grp-I"/>
</dbReference>
<dbReference type="InterPro" id="IPR036396">
    <property type="entry name" value="Cyt_P450_sf"/>
</dbReference>
<dbReference type="PANTHER" id="PTHR24289:SF21">
    <property type="entry name" value="CYTOCHROME P450 1A"/>
    <property type="match status" value="1"/>
</dbReference>
<dbReference type="PANTHER" id="PTHR24289">
    <property type="entry name" value="STEROID 17-ALPHA-HYDROXYLASE/17,20 LYASE"/>
    <property type="match status" value="1"/>
</dbReference>
<dbReference type="Pfam" id="PF00067">
    <property type="entry name" value="p450"/>
    <property type="match status" value="1"/>
</dbReference>
<dbReference type="PRINTS" id="PR00463">
    <property type="entry name" value="EP450I"/>
</dbReference>
<dbReference type="PRINTS" id="PR00385">
    <property type="entry name" value="P450"/>
</dbReference>
<dbReference type="SUPFAM" id="SSF48264">
    <property type="entry name" value="Cytochrome P450"/>
    <property type="match status" value="1"/>
</dbReference>
<dbReference type="PROSITE" id="PS00086">
    <property type="entry name" value="CYTOCHROME_P450"/>
    <property type="match status" value="1"/>
</dbReference>
<comment type="function">
    <text evidence="1 3">Cytochrome P450 protein involved in the biosynthesis of polybrominated aromatic organic compounds (PubMed:24974229). In the presence of ferredoxin, ferredoxin reductase and NADH, catalyzes the coupling of bromophenols and bromopyrroles, forming various polybrominated biphenyls and hydroxylated polybrominated diphenyl ethers (OH-BDE) (PubMed:24974229). Can also mediate the heterocoupling of 3,5-dibromocatechol (By similarity). Can also use chlorinated phenolic substrates (PubMed:24974229). 2,3,4-tribromopyrrole could be the physiological substrate (PubMed:24974229).</text>
</comment>
<comment type="cofactor">
    <cofactor evidence="2">
        <name>heme</name>
        <dbReference type="ChEBI" id="CHEBI:30413"/>
    </cofactor>
</comment>
<comment type="disruption phenotype">
    <text evidence="3">Deletion of the gene abolishes formation of the dimeric compounds 3,3',5,5'-tetrabromo-2,2'-biphenyldiol, hexabromo-2,2'-bipyrrole and the hybrid bromophenol-bromopyrrole pentabromopseudilin, whereas the monomers 2,4-dibromophenol, 2,4,6-tribromophenol and 2,3,4-tribromopyrrole can still be produced.</text>
</comment>
<comment type="similarity">
    <text evidence="5">Belongs to the cytochrome P450 family.</text>
</comment>